<proteinExistence type="evidence at protein level"/>
<comment type="function">
    <text evidence="2">Inhibins and activins inhibit and activate, respectively, the secretion of follitropin by the pituitary gland. Inhibins/activins are involved in regulating a number of diverse functions such as hypothalamic and pituitary hormone secretion, gonadal hormone secretion, germ cell development and maturation, erythroid differentiation, insulin secretion, nerve cell survival, embryonic axial development or bone growth, depending on their subunit composition. Inhibins appear to oppose the functions of activins.</text>
</comment>
<comment type="function">
    <text evidence="3">Inhibin A is a dimer of alpha/INHA and beta-A/INHBA that functions as a feedback regulator in the hypothalamic-pituitary-gonadal (HPG) axis. Inhibits the secretion of FSH from the anterior pituitary gland by acting on pituitary gonadotrope cells. Antagonizes activin A by binding to the proteoglycan, betaglycan, and forming a stable complex with and, thereby, sequestering type II activin receptors while excluding type I receptor.</text>
</comment>
<comment type="function">
    <text evidence="2 4">Inhibin B is a dimer of alpha and beta-B that plays a crucial role in the regulation of the reproductive system by inhibiting the secretion of follicle-stimulating hormone (FSH) from the anterior pituitary gland. Thereby, maintains reproductive homeostasis in both males and females. Acts as a more potent suppressor of FSH release than inhibin A (By similarity). Functions as competitive receptor antagonist binding activin type II receptors with high affinity in the presence of the TGF-beta type III coreceptor/TGFBR3L (By similarity).</text>
</comment>
<comment type="subunit">
    <text evidence="2">Dimeric, linked by one or more disulfide bonds. Activin B is a dimer of alpha and beta-B. Inhibin A is a dimer of alpha and beta-A. Inhibin B is a dimer of alpha and beta-B. Interacts with TGFBR3L; this interaction regulates female fertility.</text>
</comment>
<comment type="subcellular location">
    <subcellularLocation>
        <location evidence="4">Secreted</location>
    </subcellularLocation>
</comment>
<comment type="PTM">
    <text>Proteolytic processing yields a number of bioactive forms, consisting either solely of the mature alpha chain, of the most N-terminal propeptide linked through a disulfide bond to the mature alpha chain, or of the entire proprotein.</text>
</comment>
<comment type="similarity">
    <text evidence="7">Belongs to the TGF-beta family.</text>
</comment>
<name>INHA_BOVIN</name>
<evidence type="ECO:0000250" key="1"/>
<evidence type="ECO:0000250" key="2">
    <source>
        <dbReference type="UniProtKB" id="P05111"/>
    </source>
</evidence>
<evidence type="ECO:0000250" key="3">
    <source>
        <dbReference type="UniProtKB" id="P08476"/>
    </source>
</evidence>
<evidence type="ECO:0000250" key="4">
    <source>
        <dbReference type="UniProtKB" id="P17490"/>
    </source>
</evidence>
<evidence type="ECO:0000255" key="5"/>
<evidence type="ECO:0000269" key="6">
    <source>
    </source>
</evidence>
<evidence type="ECO:0000305" key="7"/>
<organism>
    <name type="scientific">Bos taurus</name>
    <name type="common">Bovine</name>
    <dbReference type="NCBI Taxonomy" id="9913"/>
    <lineage>
        <taxon>Eukaryota</taxon>
        <taxon>Metazoa</taxon>
        <taxon>Chordata</taxon>
        <taxon>Craniata</taxon>
        <taxon>Vertebrata</taxon>
        <taxon>Euteleostomi</taxon>
        <taxon>Mammalia</taxon>
        <taxon>Eutheria</taxon>
        <taxon>Laurasiatheria</taxon>
        <taxon>Artiodactyla</taxon>
        <taxon>Ruminantia</taxon>
        <taxon>Pecora</taxon>
        <taxon>Bovidae</taxon>
        <taxon>Bovinae</taxon>
        <taxon>Bos</taxon>
    </lineage>
</organism>
<protein>
    <recommendedName>
        <fullName>Inhibin alpha chain</fullName>
    </recommendedName>
</protein>
<keyword id="KW-0165">Cleavage on pair of basic residues</keyword>
<keyword id="KW-0903">Direct protein sequencing</keyword>
<keyword id="KW-1015">Disulfide bond</keyword>
<keyword id="KW-0325">Glycoprotein</keyword>
<keyword id="KW-0339">Growth factor</keyword>
<keyword id="KW-0372">Hormone</keyword>
<keyword id="KW-1185">Reference proteome</keyword>
<keyword id="KW-0964">Secreted</keyword>
<keyword id="KW-0732">Signal</keyword>
<accession>P07994</accession>
<accession>Q2TBQ2</accession>
<dbReference type="EMBL" id="M13273">
    <property type="protein sequence ID" value="AAA97414.1"/>
    <property type="molecule type" value="mRNA"/>
</dbReference>
<dbReference type="EMBL" id="BC109837">
    <property type="protein sequence ID" value="AAI09838.1"/>
    <property type="molecule type" value="mRNA"/>
</dbReference>
<dbReference type="EMBL" id="U16237">
    <property type="protein sequence ID" value="AAB60262.1"/>
    <property type="molecule type" value="Genomic_DNA"/>
</dbReference>
<dbReference type="PIR" id="A25732">
    <property type="entry name" value="A25732"/>
</dbReference>
<dbReference type="RefSeq" id="NP_776519.2">
    <property type="nucleotide sequence ID" value="NM_174094.4"/>
</dbReference>
<dbReference type="FunCoup" id="P07994">
    <property type="interactions" value="336"/>
</dbReference>
<dbReference type="STRING" id="9913.ENSBTAP00000013154"/>
<dbReference type="GlyCosmos" id="P07994">
    <property type="glycosylation" value="2 sites, No reported glycans"/>
</dbReference>
<dbReference type="GlyGen" id="P07994">
    <property type="glycosylation" value="2 sites"/>
</dbReference>
<dbReference type="PaxDb" id="9913-ENSBTAP00000013154"/>
<dbReference type="Ensembl" id="ENSBTAT00000013154.4">
    <property type="protein sequence ID" value="ENSBTAP00000013154.3"/>
    <property type="gene ID" value="ENSBTAG00000009972.4"/>
</dbReference>
<dbReference type="GeneID" id="281254"/>
<dbReference type="KEGG" id="bta:281254"/>
<dbReference type="CTD" id="3623"/>
<dbReference type="VEuPathDB" id="HostDB:ENSBTAG00000009972"/>
<dbReference type="VGNC" id="VGNC:30199">
    <property type="gene designation" value="INHA"/>
</dbReference>
<dbReference type="eggNOG" id="KOG3900">
    <property type="taxonomic scope" value="Eukaryota"/>
</dbReference>
<dbReference type="GeneTree" id="ENSGT00390000005935"/>
<dbReference type="HOGENOM" id="CLU_064515_0_0_1"/>
<dbReference type="InParanoid" id="P07994"/>
<dbReference type="OMA" id="TYVFRPS"/>
<dbReference type="OrthoDB" id="9929039at2759"/>
<dbReference type="TreeFam" id="TF331531"/>
<dbReference type="Reactome" id="R-BTA-1502540">
    <property type="pathway name" value="Signaling by Activin"/>
</dbReference>
<dbReference type="Reactome" id="R-BTA-201451">
    <property type="pathway name" value="Signaling by BMP"/>
</dbReference>
<dbReference type="Reactome" id="R-BTA-209822">
    <property type="pathway name" value="Glycoprotein hormones"/>
</dbReference>
<dbReference type="Reactome" id="R-BTA-9839406">
    <property type="pathway name" value="TGFBR3 regulates activin signaling"/>
</dbReference>
<dbReference type="Proteomes" id="UP000009136">
    <property type="component" value="Chromosome 2"/>
</dbReference>
<dbReference type="Bgee" id="ENSBTAG00000009972">
    <property type="expression patterns" value="Expressed in granulosa cell and 91 other cell types or tissues"/>
</dbReference>
<dbReference type="GO" id="GO:0005615">
    <property type="term" value="C:extracellular space"/>
    <property type="evidence" value="ECO:0000318"/>
    <property type="project" value="GO_Central"/>
</dbReference>
<dbReference type="GO" id="GO:0043512">
    <property type="term" value="C:inhibin A complex"/>
    <property type="evidence" value="ECO:0007669"/>
    <property type="project" value="Ensembl"/>
</dbReference>
<dbReference type="GO" id="GO:0034673">
    <property type="term" value="C:inhibin-betaglycan-ActRII complex"/>
    <property type="evidence" value="ECO:0007669"/>
    <property type="project" value="Ensembl"/>
</dbReference>
<dbReference type="GO" id="GO:0005125">
    <property type="term" value="F:cytokine activity"/>
    <property type="evidence" value="ECO:0000318"/>
    <property type="project" value="GO_Central"/>
</dbReference>
<dbReference type="GO" id="GO:0008083">
    <property type="term" value="F:growth factor activity"/>
    <property type="evidence" value="ECO:0007669"/>
    <property type="project" value="UniProtKB-KW"/>
</dbReference>
<dbReference type="GO" id="GO:0005179">
    <property type="term" value="F:hormone activity"/>
    <property type="evidence" value="ECO:0007669"/>
    <property type="project" value="UniProtKB-KW"/>
</dbReference>
<dbReference type="GO" id="GO:0042541">
    <property type="term" value="P:hemoglobin biosynthetic process"/>
    <property type="evidence" value="ECO:0000250"/>
    <property type="project" value="UniProtKB"/>
</dbReference>
<dbReference type="GO" id="GO:0051726">
    <property type="term" value="P:regulation of cell cycle"/>
    <property type="evidence" value="ECO:0007669"/>
    <property type="project" value="Ensembl"/>
</dbReference>
<dbReference type="GO" id="GO:0042127">
    <property type="term" value="P:regulation of cell population proliferation"/>
    <property type="evidence" value="ECO:0007669"/>
    <property type="project" value="Ensembl"/>
</dbReference>
<dbReference type="FunFam" id="2.10.90.10:FF:000024">
    <property type="entry name" value="Inhibin alpha chain"/>
    <property type="match status" value="1"/>
</dbReference>
<dbReference type="Gene3D" id="2.10.90.10">
    <property type="entry name" value="Cystine-knot cytokines"/>
    <property type="match status" value="1"/>
</dbReference>
<dbReference type="InterPro" id="IPR029034">
    <property type="entry name" value="Cystine-knot_cytokine"/>
</dbReference>
<dbReference type="InterPro" id="IPR017175">
    <property type="entry name" value="Inhibin_asu"/>
</dbReference>
<dbReference type="InterPro" id="IPR001839">
    <property type="entry name" value="TGF-b_C"/>
</dbReference>
<dbReference type="InterPro" id="IPR015615">
    <property type="entry name" value="TGF-beta-rel"/>
</dbReference>
<dbReference type="InterPro" id="IPR017948">
    <property type="entry name" value="TGFb_CS"/>
</dbReference>
<dbReference type="PANTHER" id="PTHR11848:SF117">
    <property type="entry name" value="INHIBIN ALPHA CHAIN"/>
    <property type="match status" value="1"/>
</dbReference>
<dbReference type="PANTHER" id="PTHR11848">
    <property type="entry name" value="TGF-BETA FAMILY"/>
    <property type="match status" value="1"/>
</dbReference>
<dbReference type="Pfam" id="PF00019">
    <property type="entry name" value="TGF_beta"/>
    <property type="match status" value="1"/>
</dbReference>
<dbReference type="PIRSF" id="PIRSF037328">
    <property type="entry name" value="Inhibin_alpha_subunit"/>
    <property type="match status" value="1"/>
</dbReference>
<dbReference type="PRINTS" id="PR00669">
    <property type="entry name" value="INHIBINA"/>
</dbReference>
<dbReference type="SMART" id="SM00204">
    <property type="entry name" value="TGFB"/>
    <property type="match status" value="1"/>
</dbReference>
<dbReference type="SUPFAM" id="SSF57501">
    <property type="entry name" value="Cystine-knot cytokines"/>
    <property type="match status" value="1"/>
</dbReference>
<dbReference type="PROSITE" id="PS00250">
    <property type="entry name" value="TGF_BETA_1"/>
    <property type="match status" value="1"/>
</dbReference>
<dbReference type="PROSITE" id="PS51362">
    <property type="entry name" value="TGF_BETA_2"/>
    <property type="match status" value="1"/>
</dbReference>
<feature type="signal peptide" evidence="6">
    <location>
        <begin position="1"/>
        <end position="17"/>
    </location>
</feature>
<feature type="propeptide" id="PRO_0000033676" evidence="1">
    <location>
        <begin position="18"/>
        <end position="60"/>
    </location>
</feature>
<feature type="propeptide" id="PRO_0000033677" description="Inhibin alpha N-terminal region" evidence="1">
    <location>
        <begin position="61"/>
        <end position="226"/>
    </location>
</feature>
<feature type="chain" id="PRO_0000033678" description="Inhibin alpha chain">
    <location>
        <begin position="227"/>
        <end position="360"/>
    </location>
</feature>
<feature type="site" description="Cleavage" evidence="1">
    <location>
        <begin position="60"/>
        <end position="61"/>
    </location>
</feature>
<feature type="site" description="Cleavage" evidence="1">
    <location>
        <begin position="226"/>
        <end position="227"/>
    </location>
</feature>
<feature type="glycosylation site" description="N-linked (GlcNAc...) asparagine" evidence="5">
    <location>
        <position position="140"/>
    </location>
</feature>
<feature type="glycosylation site" description="N-linked (GlcNAc...) asparagine" evidence="1">
    <location>
        <position position="262"/>
    </location>
</feature>
<feature type="disulfide bond" evidence="1">
    <location>
        <begin position="256"/>
        <end position="322"/>
    </location>
</feature>
<feature type="disulfide bond" evidence="1">
    <location>
        <begin position="285"/>
        <end position="357"/>
    </location>
</feature>
<feature type="disulfide bond" evidence="1">
    <location>
        <begin position="289"/>
        <end position="359"/>
    </location>
</feature>
<feature type="disulfide bond" description="Interchain" evidence="1">
    <location>
        <position position="321"/>
    </location>
</feature>
<feature type="sequence conflict" description="In Ref. 2; AAI09838." evidence="7" ref="2">
    <original>P</original>
    <variation>H</variation>
    <location>
        <position position="42"/>
    </location>
</feature>
<reference key="1">
    <citation type="journal article" date="1986" name="Proc. Natl. Acad. Sci. U.S.A.">
        <title>Cloning and sequence analysis of cDNA species coding for the two subunits of inhibin from bovine follicular fluid.</title>
        <authorList>
            <person name="Forage R.G."/>
            <person name="Ring J.M."/>
            <person name="Brown R.W."/>
            <person name="McInerney B.V."/>
            <person name="Cobon G.S."/>
            <person name="Gregson R.P."/>
            <person name="Robertson D.M."/>
            <person name="Morgan F.J."/>
            <person name="Hearn M.T.W."/>
            <person name="Findlay J.K."/>
            <person name="Wettenhall R.E.H."/>
            <person name="Burger H.G."/>
            <person name="de Kretser D.M."/>
        </authorList>
    </citation>
    <scope>NUCLEOTIDE SEQUENCE [MRNA]</scope>
    <source>
        <tissue>Ovarian follicular fluid</tissue>
    </source>
</reference>
<reference key="2">
    <citation type="submission" date="2005-11" db="EMBL/GenBank/DDBJ databases">
        <authorList>
            <consortium name="NIH - Mammalian Gene Collection (MGC) project"/>
        </authorList>
    </citation>
    <scope>NUCLEOTIDE SEQUENCE [LARGE SCALE MRNA]</scope>
    <source>
        <strain>Crossbred X Angus</strain>
        <tissue>Liver</tissue>
    </source>
</reference>
<reference key="3">
    <citation type="journal article" date="1994" name="Eur. J. Biochem.">
        <title>Genomic cloning and sequence analyses of the bovine alpha-, beta A- and beta B-inhibin/activin genes. Identification of transcription factor AP-2-binding sites in the 5'-flanking regions by DNase I footprinting.</title>
        <authorList>
            <person name="Thompson D.A."/>
            <person name="Cronin C.N."/>
            <person name="Martin F."/>
        </authorList>
    </citation>
    <scope>NUCLEOTIDE SEQUENCE [GENOMIC DNA] OF 1-87</scope>
    <source>
        <tissue>Liver</tissue>
    </source>
</reference>
<reference key="4">
    <citation type="journal article" date="1986" name="Mol. Cell. Endocrinol.">
        <title>Isolation of bovine follicular fluid inhibin of about 32 kDa.</title>
        <authorList>
            <person name="Fukuda M."/>
            <person name="Miyamoto K."/>
            <person name="Hasegawa Y."/>
            <person name="Nomura M."/>
            <person name="Igarashi M."/>
            <person name="Kangawa K."/>
            <person name="Matsuo H."/>
        </authorList>
    </citation>
    <scope>PROTEIN SEQUENCE OF 227-230</scope>
</reference>
<reference key="5">
    <citation type="journal article" date="1989" name="Biochem. Biophys. Res. Commun.">
        <title>Inhibin alpha-subunit monomer is present in bovine follicular fluid.</title>
        <authorList>
            <person name="Sugino K."/>
            <person name="Nakamura T."/>
            <person name="Takio K."/>
            <person name="Titani K."/>
            <person name="Miyamoto K."/>
            <person name="Hasegawa Y."/>
            <person name="Igarashi M."/>
            <person name="Sugino H."/>
        </authorList>
    </citation>
    <scope>PROTEIN SEQUENCE OF 18-37 AND 227-246</scope>
    <scope>DISULFIDE BOND</scope>
</reference>
<gene>
    <name type="primary">INHA</name>
</gene>
<sequence length="360" mass="38810">MWLQLLLLLLAPQGGHGCHGLELDRELVLAKVRALFLDALGPPPVTGEGGDPGVRRLHRRHAVGGFMRRGSEPEDQDVSQAILFPAAGASCGDEPDAGEAEEGLFTYVFQPSQHTRSRQVTSAQLWFHTGLDRQETAAANSSEPLLGLLVLTSGGPMPVPMSLGQAPPRWAVLHLATSAFPLLTHPVLALLLRCPLCSCSTRPEATPFLVAHTRAKPPSGGERARRSTPPLPWPWSPAALRLLQRPPEEPAAHADCHRAALNISFQELGWDRWIVHPPSFIFYYCHGGCGLSPPQDLPLPVPGVPPTPVQPLSLVPGAQPCCAALPGTMRPLHVRTTSDGGYSFKYEMVPNLLTQHCACI</sequence>